<proteinExistence type="evidence at transcript level"/>
<dbReference type="EMBL" id="AB028622">
    <property type="protein sequence ID" value="BAB01396.1"/>
    <property type="status" value="ALT_SEQ"/>
    <property type="molecule type" value="Genomic_DNA"/>
</dbReference>
<dbReference type="EMBL" id="CP002686">
    <property type="protein sequence ID" value="AEE76589.1"/>
    <property type="molecule type" value="Genomic_DNA"/>
</dbReference>
<dbReference type="EMBL" id="AB493628">
    <property type="protein sequence ID" value="BAH30466.1"/>
    <property type="molecule type" value="mRNA"/>
</dbReference>
<dbReference type="RefSeq" id="NP_188848.1">
    <property type="nucleotide sequence ID" value="NM_113106.2"/>
</dbReference>
<dbReference type="SMR" id="Q9LRJ4"/>
<dbReference type="FunCoup" id="Q9LRJ4">
    <property type="interactions" value="81"/>
</dbReference>
<dbReference type="IntAct" id="Q9LRJ4">
    <property type="interactions" value="1"/>
</dbReference>
<dbReference type="STRING" id="3702.Q9LRJ4"/>
<dbReference type="PaxDb" id="3702-AT3G22100.1"/>
<dbReference type="EnsemblPlants" id="AT3G22100.1">
    <property type="protein sequence ID" value="AT3G22100.1"/>
    <property type="gene ID" value="AT3G22100"/>
</dbReference>
<dbReference type="GeneID" id="821772"/>
<dbReference type="Gramene" id="AT3G22100.1">
    <property type="protein sequence ID" value="AT3G22100.1"/>
    <property type="gene ID" value="AT3G22100"/>
</dbReference>
<dbReference type="KEGG" id="ath:AT3G22100"/>
<dbReference type="Araport" id="AT3G22100"/>
<dbReference type="TAIR" id="AT3G22100"/>
<dbReference type="eggNOG" id="ENOG502S14F">
    <property type="taxonomic scope" value="Eukaryota"/>
</dbReference>
<dbReference type="HOGENOM" id="CLU_069236_0_0_1"/>
<dbReference type="InParanoid" id="Q9LRJ4"/>
<dbReference type="OMA" id="PASQYVH"/>
<dbReference type="PRO" id="PR:Q9LRJ4"/>
<dbReference type="Proteomes" id="UP000006548">
    <property type="component" value="Chromosome 3"/>
</dbReference>
<dbReference type="ExpressionAtlas" id="Q9LRJ4">
    <property type="expression patterns" value="baseline and differential"/>
</dbReference>
<dbReference type="GO" id="GO:0005634">
    <property type="term" value="C:nucleus"/>
    <property type="evidence" value="ECO:0007669"/>
    <property type="project" value="UniProtKB-SubCell"/>
</dbReference>
<dbReference type="GO" id="GO:0003677">
    <property type="term" value="F:DNA binding"/>
    <property type="evidence" value="ECO:0007669"/>
    <property type="project" value="UniProtKB-KW"/>
</dbReference>
<dbReference type="GO" id="GO:0003700">
    <property type="term" value="F:DNA-binding transcription factor activity"/>
    <property type="evidence" value="ECO:0000250"/>
    <property type="project" value="TAIR"/>
</dbReference>
<dbReference type="GO" id="GO:0046983">
    <property type="term" value="F:protein dimerization activity"/>
    <property type="evidence" value="ECO:0007669"/>
    <property type="project" value="InterPro"/>
</dbReference>
<dbReference type="CDD" id="cd11393">
    <property type="entry name" value="bHLH_AtbHLH_like"/>
    <property type="match status" value="1"/>
</dbReference>
<dbReference type="Gene3D" id="4.10.280.10">
    <property type="entry name" value="Helix-loop-helix DNA-binding domain"/>
    <property type="match status" value="1"/>
</dbReference>
<dbReference type="InterPro" id="IPR045239">
    <property type="entry name" value="bHLH95_bHLH"/>
</dbReference>
<dbReference type="InterPro" id="IPR011598">
    <property type="entry name" value="bHLH_dom"/>
</dbReference>
<dbReference type="InterPro" id="IPR036638">
    <property type="entry name" value="HLH_DNA-bd_sf"/>
</dbReference>
<dbReference type="InterPro" id="IPR045843">
    <property type="entry name" value="IND-like"/>
</dbReference>
<dbReference type="PANTHER" id="PTHR45914:SF24">
    <property type="entry name" value="BHLH DOMAIN-CONTAINING PROTEIN"/>
    <property type="match status" value="1"/>
</dbReference>
<dbReference type="PANTHER" id="PTHR45914">
    <property type="entry name" value="TRANSCRIPTION FACTOR HEC3-RELATED"/>
    <property type="match status" value="1"/>
</dbReference>
<dbReference type="SUPFAM" id="SSF47459">
    <property type="entry name" value="HLH, helix-loop-helix DNA-binding domain"/>
    <property type="match status" value="1"/>
</dbReference>
<dbReference type="PROSITE" id="PS50888">
    <property type="entry name" value="BHLH"/>
    <property type="match status" value="1"/>
</dbReference>
<name>BH117_ARATH</name>
<comment type="subunit">
    <text evidence="3">Homodimer.</text>
</comment>
<comment type="subcellular location">
    <subcellularLocation>
        <location evidence="1">Nucleus</location>
    </subcellularLocation>
</comment>
<comment type="sequence caution" evidence="3">
    <conflict type="erroneous gene model prediction">
        <sequence resource="EMBL-CDS" id="BAB01396"/>
    </conflict>
</comment>
<accession>Q9LRJ4</accession>
<accession>C0SVC5</accession>
<keyword id="KW-0238">DNA-binding</keyword>
<keyword id="KW-0539">Nucleus</keyword>
<keyword id="KW-1185">Reference proteome</keyword>
<keyword id="KW-0804">Transcription</keyword>
<keyword id="KW-0805">Transcription regulation</keyword>
<organism>
    <name type="scientific">Arabidopsis thaliana</name>
    <name type="common">Mouse-ear cress</name>
    <dbReference type="NCBI Taxonomy" id="3702"/>
    <lineage>
        <taxon>Eukaryota</taxon>
        <taxon>Viridiplantae</taxon>
        <taxon>Streptophyta</taxon>
        <taxon>Embryophyta</taxon>
        <taxon>Tracheophyta</taxon>
        <taxon>Spermatophyta</taxon>
        <taxon>Magnoliopsida</taxon>
        <taxon>eudicotyledons</taxon>
        <taxon>Gunneridae</taxon>
        <taxon>Pentapetalae</taxon>
        <taxon>rosids</taxon>
        <taxon>malvids</taxon>
        <taxon>Brassicales</taxon>
        <taxon>Brassicaceae</taxon>
        <taxon>Camelineae</taxon>
        <taxon>Arabidopsis</taxon>
    </lineage>
</organism>
<feature type="chain" id="PRO_0000358802" description="Transcription factor bHLH117">
    <location>
        <begin position="1"/>
        <end position="252"/>
    </location>
</feature>
<feature type="domain" description="bHLH" evidence="1">
    <location>
        <begin position="130"/>
        <end position="179"/>
    </location>
</feature>
<feature type="region of interest" description="Disordered" evidence="2">
    <location>
        <begin position="103"/>
        <end position="141"/>
    </location>
</feature>
<feature type="compositionally biased region" description="Low complexity" evidence="2">
    <location>
        <begin position="121"/>
        <end position="134"/>
    </location>
</feature>
<evidence type="ECO:0000255" key="1">
    <source>
        <dbReference type="PROSITE-ProRule" id="PRU00981"/>
    </source>
</evidence>
<evidence type="ECO:0000256" key="2">
    <source>
        <dbReference type="SAM" id="MobiDB-lite"/>
    </source>
</evidence>
<evidence type="ECO:0000305" key="3"/>
<sequence>METPAYDFDSLTDLPPLPPSDFTPSNAFTFPDHNLDFSFLDSTLSLLNRHHLSESTRLEQIFYDSTHTQLFHNDDTTTTTTPFLHLPDLKSIDAVEEPTTMKLFPSLSPPLPAAKRQKLNSTSSSTTSGSPTASNDGGIITKRRKISDKIRSLEKLMPWERKMNLAMTLEESHKYIKFLQSQIASLRWMPLESVYNTAGEVGETDLLKSLTRQQILQVLANSPGSRNVLSSRGVCVFSYEQLLSLKTMSRNL</sequence>
<protein>
    <recommendedName>
        <fullName>Transcription factor bHLH117</fullName>
    </recommendedName>
    <alternativeName>
        <fullName>Basic helix-loop-helix protein 117</fullName>
        <shortName>AtbHLH117</shortName>
        <shortName>bHLH 117</shortName>
    </alternativeName>
    <alternativeName>
        <fullName>Transcription factor EN 140</fullName>
    </alternativeName>
    <alternativeName>
        <fullName>bHLH transcription factor bHLH117</fullName>
    </alternativeName>
</protein>
<reference key="1">
    <citation type="journal article" date="2000" name="DNA Res.">
        <title>Structural analysis of Arabidopsis thaliana chromosome 3. I. Sequence features of the regions of 4,504,864 bp covered by sixty P1 and TAC clones.</title>
        <authorList>
            <person name="Sato S."/>
            <person name="Nakamura Y."/>
            <person name="Kaneko T."/>
            <person name="Katoh T."/>
            <person name="Asamizu E."/>
            <person name="Tabata S."/>
        </authorList>
    </citation>
    <scope>NUCLEOTIDE SEQUENCE [LARGE SCALE GENOMIC DNA]</scope>
    <source>
        <strain>cv. Columbia</strain>
    </source>
</reference>
<reference key="2">
    <citation type="journal article" date="2017" name="Plant J.">
        <title>Araport11: a complete reannotation of the Arabidopsis thaliana reference genome.</title>
        <authorList>
            <person name="Cheng C.Y."/>
            <person name="Krishnakumar V."/>
            <person name="Chan A.P."/>
            <person name="Thibaud-Nissen F."/>
            <person name="Schobel S."/>
            <person name="Town C.D."/>
        </authorList>
    </citation>
    <scope>GENOME REANNOTATION</scope>
    <source>
        <strain>cv. Columbia</strain>
    </source>
</reference>
<reference key="3">
    <citation type="submission" date="2009-03" db="EMBL/GenBank/DDBJ databases">
        <title>ORF cloning and analysis of Arabidopsis transcription factor genes.</title>
        <authorList>
            <person name="Fujita M."/>
            <person name="Mizukado S."/>
            <person name="Seki M."/>
            <person name="Shinozaki K."/>
            <person name="Mitsuda N."/>
            <person name="Takiguchi Y."/>
            <person name="Takagi M."/>
        </authorList>
    </citation>
    <scope>NUCLEOTIDE SEQUENCE [LARGE SCALE MRNA]</scope>
</reference>
<reference key="4">
    <citation type="journal article" date="2003" name="Mol. Biol. Evol.">
        <title>The basic helix-loop-helix transcription factor family in plants: a genome-wide study of protein structure and functional diversity.</title>
        <authorList>
            <person name="Heim M.A."/>
            <person name="Jakoby M."/>
            <person name="Werber M."/>
            <person name="Martin C."/>
            <person name="Weisshaar B."/>
            <person name="Bailey P.C."/>
        </authorList>
    </citation>
    <scope>GENE FAMILY</scope>
    <scope>NOMENCLATURE</scope>
</reference>
<reference key="5">
    <citation type="journal article" date="2003" name="Plant Cell">
        <title>The Arabidopsis basic/helix-loop-helix transcription factor family.</title>
        <authorList>
            <person name="Toledo-Ortiz G."/>
            <person name="Huq E."/>
            <person name="Quail P.H."/>
        </authorList>
    </citation>
    <scope>GENE FAMILY</scope>
</reference>
<reference key="6">
    <citation type="journal article" date="2003" name="Plant Cell">
        <title>Update on the basic helix-loop-helix transcription factor gene family in Arabidopsis thaliana.</title>
        <authorList>
            <person name="Bailey P.C."/>
            <person name="Martin C."/>
            <person name="Toledo-Ortiz G."/>
            <person name="Quail P.H."/>
            <person name="Huq E."/>
            <person name="Heim M.A."/>
            <person name="Jakoby M."/>
            <person name="Werber M."/>
            <person name="Weisshaar B."/>
        </authorList>
    </citation>
    <scope>GENE FAMILY</scope>
    <scope>NOMENCLATURE</scope>
</reference>
<gene>
    <name type="primary">BHLH117</name>
    <name type="synonym">EN140</name>
    <name type="ordered locus">At3g22100</name>
    <name type="ORF">MZN24.31</name>
</gene>